<sequence length="353" mass="38771">MNRSVVLILLLNIIVSVVIVLSSHSWFSVCDGLELNTLSVLPILCGQFSPRGVESTIKYFLVQAFSAAMILNVALVQLWLCSSWSVSCPLNSFSSIVLTLALCLKLGLFPCHFWFPDVLQGLSFLQGLLLSTWQKVAPFIILVSVCNIISINVLTTLGCLSVLVGGWGGLNQSQVRKIMAFSSISHLGWICSVLSYSIYVGCIMFVVYIVLSSTVFLINNEGNLYNLSSLARLVYCNNVMGNVLVLVILSLGGLPPLTGFLNKFIALECLLSNNLLVPCAILIVGSLLSLFFYLRISFNSVLCLFPQHSMMLFSWRNVSGYYGNTSFYTVLLSILSSMSILGLLLVPALWSYH</sequence>
<gene>
    <name type="primary">ND2</name>
</gene>
<proteinExistence type="inferred from homology"/>
<organism>
    <name type="scientific">Pisaster ochraceus</name>
    <name type="common">Ochre sea star</name>
    <name type="synonym">Asterias ochracea</name>
    <dbReference type="NCBI Taxonomy" id="7612"/>
    <lineage>
        <taxon>Eukaryota</taxon>
        <taxon>Metazoa</taxon>
        <taxon>Echinodermata</taxon>
        <taxon>Eleutherozoa</taxon>
        <taxon>Asterozoa</taxon>
        <taxon>Asteroidea</taxon>
        <taxon>Forcipulatacea</taxon>
        <taxon>Forcipulatida</taxon>
        <taxon>Asteriidae</taxon>
        <taxon>Pisaster</taxon>
    </lineage>
</organism>
<geneLocation type="mitochondrion"/>
<accession>P24996</accession>
<feature type="chain" id="PRO_0000117626" description="NADH-ubiquinone oxidoreductase chain 2">
    <location>
        <begin position="1"/>
        <end position="353"/>
    </location>
</feature>
<feature type="transmembrane region" description="Helical" evidence="2">
    <location>
        <begin position="4"/>
        <end position="24"/>
    </location>
</feature>
<feature type="transmembrane region" description="Helical" evidence="2">
    <location>
        <begin position="60"/>
        <end position="80"/>
    </location>
</feature>
<feature type="transmembrane region" description="Helical" evidence="2">
    <location>
        <begin position="96"/>
        <end position="116"/>
    </location>
</feature>
<feature type="transmembrane region" description="Helical" evidence="2">
    <location>
        <begin position="139"/>
        <end position="159"/>
    </location>
</feature>
<feature type="transmembrane region" description="Helical" evidence="2">
    <location>
        <begin position="198"/>
        <end position="218"/>
    </location>
</feature>
<feature type="transmembrane region" description="Helical" evidence="2">
    <location>
        <begin position="241"/>
        <end position="261"/>
    </location>
</feature>
<feature type="transmembrane region" description="Helical" evidence="2">
    <location>
        <begin position="274"/>
        <end position="294"/>
    </location>
</feature>
<feature type="transmembrane region" description="Helical" evidence="2">
    <location>
        <begin position="330"/>
        <end position="350"/>
    </location>
</feature>
<evidence type="ECO:0000250" key="1"/>
<evidence type="ECO:0000255" key="2"/>
<evidence type="ECO:0000305" key="3"/>
<name>NU2M_PISOC</name>
<keyword id="KW-0249">Electron transport</keyword>
<keyword id="KW-0472">Membrane</keyword>
<keyword id="KW-0496">Mitochondrion</keyword>
<keyword id="KW-0999">Mitochondrion inner membrane</keyword>
<keyword id="KW-0520">NAD</keyword>
<keyword id="KW-0679">Respiratory chain</keyword>
<keyword id="KW-1278">Translocase</keyword>
<keyword id="KW-0812">Transmembrane</keyword>
<keyword id="KW-1133">Transmembrane helix</keyword>
<keyword id="KW-0813">Transport</keyword>
<keyword id="KW-0830">Ubiquinone</keyword>
<reference key="1">
    <citation type="journal article" date="1990" name="J. Mol. Evol.">
        <title>Nucleotide sequence of nine protein-coding genes and 22 tRNAs in the mitochondrial DNA of the sea star Pisaster ochraceus.</title>
        <authorList>
            <person name="Smith M.J."/>
            <person name="Banfield D.K."/>
            <person name="Doteval K."/>
            <person name="Gorski S."/>
            <person name="Kowbel D.J."/>
        </authorList>
    </citation>
    <scope>NUCLEOTIDE SEQUENCE [GENOMIC DNA]</scope>
</reference>
<comment type="function">
    <text evidence="1">Core subunit of the mitochondrial membrane respiratory chain NADH dehydrogenase (Complex I) that is believed to belong to the minimal assembly required for catalysis. Complex I functions in the transfer of electrons from NADH to the respiratory chain. The immediate electron acceptor for the enzyme is believed to be ubiquinone (By similarity).</text>
</comment>
<comment type="catalytic activity">
    <reaction>
        <text>a ubiquinone + NADH + 5 H(+)(in) = a ubiquinol + NAD(+) + 4 H(+)(out)</text>
        <dbReference type="Rhea" id="RHEA:29091"/>
        <dbReference type="Rhea" id="RHEA-COMP:9565"/>
        <dbReference type="Rhea" id="RHEA-COMP:9566"/>
        <dbReference type="ChEBI" id="CHEBI:15378"/>
        <dbReference type="ChEBI" id="CHEBI:16389"/>
        <dbReference type="ChEBI" id="CHEBI:17976"/>
        <dbReference type="ChEBI" id="CHEBI:57540"/>
        <dbReference type="ChEBI" id="CHEBI:57945"/>
        <dbReference type="EC" id="7.1.1.2"/>
    </reaction>
</comment>
<comment type="subcellular location">
    <subcellularLocation>
        <location>Mitochondrion inner membrane</location>
        <topology>Multi-pass membrane protein</topology>
    </subcellularLocation>
</comment>
<comment type="similarity">
    <text evidence="3">Belongs to the complex I subunit 2 family.</text>
</comment>
<dbReference type="EC" id="7.1.1.2"/>
<dbReference type="EMBL" id="X55514">
    <property type="protein sequence ID" value="CAA39122.1"/>
    <property type="molecule type" value="Genomic_DNA"/>
</dbReference>
<dbReference type="PIR" id="S14203">
    <property type="entry name" value="S14203"/>
</dbReference>
<dbReference type="SMR" id="P24996"/>
<dbReference type="GO" id="GO:0005743">
    <property type="term" value="C:mitochondrial inner membrane"/>
    <property type="evidence" value="ECO:0007669"/>
    <property type="project" value="UniProtKB-SubCell"/>
</dbReference>
<dbReference type="GO" id="GO:0008137">
    <property type="term" value="F:NADH dehydrogenase (ubiquinone) activity"/>
    <property type="evidence" value="ECO:0007669"/>
    <property type="project" value="UniProtKB-EC"/>
</dbReference>
<dbReference type="GO" id="GO:0006120">
    <property type="term" value="P:mitochondrial electron transport, NADH to ubiquinone"/>
    <property type="evidence" value="ECO:0007669"/>
    <property type="project" value="InterPro"/>
</dbReference>
<dbReference type="InterPro" id="IPR050175">
    <property type="entry name" value="Complex_I_Subunit_2"/>
</dbReference>
<dbReference type="InterPro" id="IPR010933">
    <property type="entry name" value="NADH_DH_su2_C"/>
</dbReference>
<dbReference type="InterPro" id="IPR003917">
    <property type="entry name" value="NADH_UbQ_OxRdtase_chain2"/>
</dbReference>
<dbReference type="InterPro" id="IPR001750">
    <property type="entry name" value="ND/Mrp_TM"/>
</dbReference>
<dbReference type="PANTHER" id="PTHR46552">
    <property type="entry name" value="NADH-UBIQUINONE OXIDOREDUCTASE CHAIN 2"/>
    <property type="match status" value="1"/>
</dbReference>
<dbReference type="PANTHER" id="PTHR46552:SF1">
    <property type="entry name" value="NADH-UBIQUINONE OXIDOREDUCTASE CHAIN 2"/>
    <property type="match status" value="1"/>
</dbReference>
<dbReference type="Pfam" id="PF06444">
    <property type="entry name" value="NADH_dehy_S2_C"/>
    <property type="match status" value="1"/>
</dbReference>
<dbReference type="Pfam" id="PF00361">
    <property type="entry name" value="Proton_antipo_M"/>
    <property type="match status" value="1"/>
</dbReference>
<dbReference type="PRINTS" id="PR01436">
    <property type="entry name" value="NADHDHGNASE2"/>
</dbReference>
<protein>
    <recommendedName>
        <fullName>NADH-ubiquinone oxidoreductase chain 2</fullName>
        <ecNumber>7.1.1.2</ecNumber>
    </recommendedName>
    <alternativeName>
        <fullName>NADH dehydrogenase subunit 2</fullName>
    </alternativeName>
</protein>